<feature type="chain" id="PRO_0000356660" description="Large ribosomal subunit protein bL33">
    <location>
        <begin position="1"/>
        <end position="57"/>
    </location>
</feature>
<name>RL33_SHEON</name>
<proteinExistence type="inferred from homology"/>
<organism>
    <name type="scientific">Shewanella oneidensis (strain ATCC 700550 / JCM 31522 / CIP 106686 / LMG 19005 / NCIMB 14063 / MR-1)</name>
    <dbReference type="NCBI Taxonomy" id="211586"/>
    <lineage>
        <taxon>Bacteria</taxon>
        <taxon>Pseudomonadati</taxon>
        <taxon>Pseudomonadota</taxon>
        <taxon>Gammaproteobacteria</taxon>
        <taxon>Alteromonadales</taxon>
        <taxon>Shewanellaceae</taxon>
        <taxon>Shewanella</taxon>
    </lineage>
</organism>
<gene>
    <name evidence="1" type="primary">rpmG</name>
    <name type="ordered locus">SO_4246</name>
</gene>
<dbReference type="EMBL" id="AE014299">
    <property type="protein sequence ID" value="AAN57217.1"/>
    <property type="molecule type" value="Genomic_DNA"/>
</dbReference>
<dbReference type="RefSeq" id="NP_719773.1">
    <property type="nucleotide sequence ID" value="NC_004347.2"/>
</dbReference>
<dbReference type="RefSeq" id="WP_006079871.1">
    <property type="nucleotide sequence ID" value="NZ_CP053946.1"/>
</dbReference>
<dbReference type="SMR" id="Q8E9M4"/>
<dbReference type="STRING" id="211586.SO_4246"/>
<dbReference type="PaxDb" id="211586-SO_4246"/>
<dbReference type="GeneID" id="94729699"/>
<dbReference type="KEGG" id="son:SO_4246"/>
<dbReference type="PATRIC" id="fig|211586.12.peg.4105"/>
<dbReference type="eggNOG" id="COG0267">
    <property type="taxonomic scope" value="Bacteria"/>
</dbReference>
<dbReference type="HOGENOM" id="CLU_190949_1_1_6"/>
<dbReference type="OrthoDB" id="21586at2"/>
<dbReference type="PhylomeDB" id="Q8E9M4"/>
<dbReference type="BioCyc" id="SONE211586:G1GMP-3922-MONOMER"/>
<dbReference type="PRO" id="PR:Q8E9M4"/>
<dbReference type="Proteomes" id="UP000008186">
    <property type="component" value="Chromosome"/>
</dbReference>
<dbReference type="GO" id="GO:0022625">
    <property type="term" value="C:cytosolic large ribosomal subunit"/>
    <property type="evidence" value="ECO:0000318"/>
    <property type="project" value="GO_Central"/>
</dbReference>
<dbReference type="GO" id="GO:0003735">
    <property type="term" value="F:structural constituent of ribosome"/>
    <property type="evidence" value="ECO:0000318"/>
    <property type="project" value="GO_Central"/>
</dbReference>
<dbReference type="GO" id="GO:0006412">
    <property type="term" value="P:translation"/>
    <property type="evidence" value="ECO:0007669"/>
    <property type="project" value="UniProtKB-UniRule"/>
</dbReference>
<dbReference type="FunFam" id="2.20.28.120:FF:000001">
    <property type="entry name" value="50S ribosomal protein L33"/>
    <property type="match status" value="1"/>
</dbReference>
<dbReference type="Gene3D" id="2.20.28.120">
    <property type="entry name" value="Ribosomal protein L33"/>
    <property type="match status" value="1"/>
</dbReference>
<dbReference type="HAMAP" id="MF_00294">
    <property type="entry name" value="Ribosomal_bL33"/>
    <property type="match status" value="1"/>
</dbReference>
<dbReference type="InterPro" id="IPR001705">
    <property type="entry name" value="Ribosomal_bL33"/>
</dbReference>
<dbReference type="InterPro" id="IPR018264">
    <property type="entry name" value="Ribosomal_bL33_CS"/>
</dbReference>
<dbReference type="InterPro" id="IPR038584">
    <property type="entry name" value="Ribosomal_bL33_sf"/>
</dbReference>
<dbReference type="InterPro" id="IPR011332">
    <property type="entry name" value="Ribosomal_zn-bd"/>
</dbReference>
<dbReference type="NCBIfam" id="NF001860">
    <property type="entry name" value="PRK00595.1"/>
    <property type="match status" value="1"/>
</dbReference>
<dbReference type="NCBIfam" id="TIGR01023">
    <property type="entry name" value="rpmG_bact"/>
    <property type="match status" value="1"/>
</dbReference>
<dbReference type="PANTHER" id="PTHR15238">
    <property type="entry name" value="54S RIBOSOMAL PROTEIN L39, MITOCHONDRIAL"/>
    <property type="match status" value="1"/>
</dbReference>
<dbReference type="PANTHER" id="PTHR15238:SF1">
    <property type="entry name" value="LARGE RIBOSOMAL SUBUNIT PROTEIN BL33M"/>
    <property type="match status" value="1"/>
</dbReference>
<dbReference type="Pfam" id="PF00471">
    <property type="entry name" value="Ribosomal_L33"/>
    <property type="match status" value="1"/>
</dbReference>
<dbReference type="SUPFAM" id="SSF57829">
    <property type="entry name" value="Zn-binding ribosomal proteins"/>
    <property type="match status" value="1"/>
</dbReference>
<dbReference type="PROSITE" id="PS00582">
    <property type="entry name" value="RIBOSOMAL_L33"/>
    <property type="match status" value="1"/>
</dbReference>
<sequence length="57" mass="6733">MAKAKGNREKIKLVSTAKTGHFYTTEKNKRNMPEKMEIKKFDPVIRQHVIYKEAKIK</sequence>
<accession>Q8E9M4</accession>
<keyword id="KW-1185">Reference proteome</keyword>
<keyword id="KW-0687">Ribonucleoprotein</keyword>
<keyword id="KW-0689">Ribosomal protein</keyword>
<reference key="1">
    <citation type="journal article" date="2002" name="Nat. Biotechnol.">
        <title>Genome sequence of the dissimilatory metal ion-reducing bacterium Shewanella oneidensis.</title>
        <authorList>
            <person name="Heidelberg J.F."/>
            <person name="Paulsen I.T."/>
            <person name="Nelson K.E."/>
            <person name="Gaidos E.J."/>
            <person name="Nelson W.C."/>
            <person name="Read T.D."/>
            <person name="Eisen J.A."/>
            <person name="Seshadri R."/>
            <person name="Ward N.L."/>
            <person name="Methe B.A."/>
            <person name="Clayton R.A."/>
            <person name="Meyer T."/>
            <person name="Tsapin A."/>
            <person name="Scott J."/>
            <person name="Beanan M.J."/>
            <person name="Brinkac L.M."/>
            <person name="Daugherty S.C."/>
            <person name="DeBoy R.T."/>
            <person name="Dodson R.J."/>
            <person name="Durkin A.S."/>
            <person name="Haft D.H."/>
            <person name="Kolonay J.F."/>
            <person name="Madupu R."/>
            <person name="Peterson J.D."/>
            <person name="Umayam L.A."/>
            <person name="White O."/>
            <person name="Wolf A.M."/>
            <person name="Vamathevan J.J."/>
            <person name="Weidman J.F."/>
            <person name="Impraim M."/>
            <person name="Lee K."/>
            <person name="Berry K.J."/>
            <person name="Lee C."/>
            <person name="Mueller J."/>
            <person name="Khouri H.M."/>
            <person name="Gill J."/>
            <person name="Utterback T.R."/>
            <person name="McDonald L.A."/>
            <person name="Feldblyum T.V."/>
            <person name="Smith H.O."/>
            <person name="Venter J.C."/>
            <person name="Nealson K.H."/>
            <person name="Fraser C.M."/>
        </authorList>
    </citation>
    <scope>NUCLEOTIDE SEQUENCE [LARGE SCALE GENOMIC DNA]</scope>
    <source>
        <strain>ATCC 700550 / JCM 31522 / CIP 106686 / LMG 19005 / NCIMB 14063 / MR-1</strain>
    </source>
</reference>
<protein>
    <recommendedName>
        <fullName evidence="1">Large ribosomal subunit protein bL33</fullName>
    </recommendedName>
    <alternativeName>
        <fullName evidence="2">50S ribosomal protein L33</fullName>
    </alternativeName>
</protein>
<comment type="similarity">
    <text evidence="1">Belongs to the bacterial ribosomal protein bL33 family.</text>
</comment>
<evidence type="ECO:0000255" key="1">
    <source>
        <dbReference type="HAMAP-Rule" id="MF_00294"/>
    </source>
</evidence>
<evidence type="ECO:0000305" key="2"/>